<reference key="1">
    <citation type="journal article" date="2008" name="Nat. Biotechnol.">
        <title>Genome sequencing and analysis of the filamentous fungus Penicillium chrysogenum.</title>
        <authorList>
            <person name="van den Berg M.A."/>
            <person name="Albang R."/>
            <person name="Albermann K."/>
            <person name="Badger J.H."/>
            <person name="Daran J.-M."/>
            <person name="Driessen A.J.M."/>
            <person name="Garcia-Estrada C."/>
            <person name="Fedorova N.D."/>
            <person name="Harris D.M."/>
            <person name="Heijne W.H.M."/>
            <person name="Joardar V.S."/>
            <person name="Kiel J.A.K.W."/>
            <person name="Kovalchuk A."/>
            <person name="Martin J.F."/>
            <person name="Nierman W.C."/>
            <person name="Nijland J.G."/>
            <person name="Pronk J.T."/>
            <person name="Roubos J.A."/>
            <person name="van der Klei I.J."/>
            <person name="van Peij N.N.M.E."/>
            <person name="Veenhuis M."/>
            <person name="von Doehren H."/>
            <person name="Wagner C."/>
            <person name="Wortman J.R."/>
            <person name="Bovenberg R.A.L."/>
        </authorList>
    </citation>
    <scope>NUCLEOTIDE SEQUENCE [LARGE SCALE GENOMIC DNA]</scope>
    <source>
        <strain>ATCC 28089 / DSM 1075 / NRRL 1951 / Wisconsin 54-1255</strain>
    </source>
</reference>
<reference key="2">
    <citation type="journal article" date="2017" name="Front. Microbiol.">
        <title>In vivo study of the sorbicillinoid gene cluster in Trichoderma reesei.</title>
        <authorList>
            <person name="Derntl C."/>
            <person name="Guzman-Chavez F."/>
            <person name="Mello-de-Sousa T.M."/>
            <person name="Busse H.J."/>
            <person name="Driessen A.J.M."/>
            <person name="Mach R.L."/>
            <person name="Mach-Aigner A.R."/>
        </authorList>
    </citation>
    <scope>FUNCTION</scope>
</reference>
<reference key="3">
    <citation type="journal article" date="2017" name="Microb. Biotechnol.">
        <title>Mechanism and regulation of sorbicillin biosynthesis by Penicillium chrysogenum.</title>
        <authorList>
            <person name="Guzman-Chavez F."/>
            <person name="Salo O."/>
            <person name="Nygaard Y."/>
            <person name="Lankhorst P.P."/>
            <person name="Bovenberg R.A.L."/>
            <person name="Driessen A.J.M."/>
        </authorList>
    </citation>
    <scope>FUNCTION</scope>
    <scope>DISRUPTION PHENOTYPE</scope>
</reference>
<organism>
    <name type="scientific">Penicillium rubens (strain ATCC 28089 / DSM 1075 / NRRL 1951 / Wisconsin 54-1255)</name>
    <name type="common">Penicillium chrysogenum</name>
    <dbReference type="NCBI Taxonomy" id="500485"/>
    <lineage>
        <taxon>Eukaryota</taxon>
        <taxon>Fungi</taxon>
        <taxon>Dikarya</taxon>
        <taxon>Ascomycota</taxon>
        <taxon>Pezizomycotina</taxon>
        <taxon>Eurotiomycetes</taxon>
        <taxon>Eurotiomycetidae</taxon>
        <taxon>Eurotiales</taxon>
        <taxon>Aspergillaceae</taxon>
        <taxon>Penicillium</taxon>
        <taxon>Penicillium chrysogenum species complex</taxon>
    </lineage>
</organism>
<feature type="chain" id="PRO_0000443847" description="Major facilitator-type transporter sorT">
    <location>
        <begin position="1"/>
        <end position="522"/>
    </location>
</feature>
<feature type="transmembrane region" description="Helical" evidence="1">
    <location>
        <begin position="52"/>
        <end position="72"/>
    </location>
</feature>
<feature type="transmembrane region" description="Helical" evidence="1">
    <location>
        <begin position="89"/>
        <end position="109"/>
    </location>
</feature>
<feature type="transmembrane region" description="Helical" evidence="1">
    <location>
        <begin position="121"/>
        <end position="141"/>
    </location>
</feature>
<feature type="transmembrane region" description="Helical" evidence="1">
    <location>
        <begin position="143"/>
        <end position="163"/>
    </location>
</feature>
<feature type="transmembrane region" description="Helical" evidence="1">
    <location>
        <begin position="183"/>
        <end position="203"/>
    </location>
</feature>
<feature type="transmembrane region" description="Helical" evidence="1">
    <location>
        <begin position="211"/>
        <end position="231"/>
    </location>
</feature>
<feature type="transmembrane region" description="Helical" evidence="1">
    <location>
        <begin position="280"/>
        <end position="300"/>
    </location>
</feature>
<feature type="transmembrane region" description="Helical" evidence="1">
    <location>
        <begin position="324"/>
        <end position="344"/>
    </location>
</feature>
<feature type="transmembrane region" description="Helical" evidence="1">
    <location>
        <begin position="366"/>
        <end position="386"/>
    </location>
</feature>
<feature type="transmembrane region" description="Helical" evidence="1">
    <location>
        <begin position="395"/>
        <end position="415"/>
    </location>
</feature>
<feature type="transmembrane region" description="Helical" evidence="1">
    <location>
        <begin position="427"/>
        <end position="447"/>
    </location>
</feature>
<feature type="transmembrane region" description="Helical" evidence="1">
    <location>
        <begin position="457"/>
        <end position="477"/>
    </location>
</feature>
<feature type="region of interest" description="Disordered" evidence="2">
    <location>
        <begin position="1"/>
        <end position="21"/>
    </location>
</feature>
<gene>
    <name evidence="4" type="primary">sorT</name>
    <name type="ORF">Pc21g05100</name>
</gene>
<accession>B6HNK5</accession>
<name>SORT_PENRW</name>
<keyword id="KW-0472">Membrane</keyword>
<keyword id="KW-1185">Reference proteome</keyword>
<keyword id="KW-0812">Transmembrane</keyword>
<keyword id="KW-1133">Transmembrane helix</keyword>
<keyword id="KW-0813">Transport</keyword>
<dbReference type="EMBL" id="AM920436">
    <property type="protein sequence ID" value="CAP95407.1"/>
    <property type="molecule type" value="Genomic_DNA"/>
</dbReference>
<dbReference type="RefSeq" id="XP_002567556.1">
    <property type="nucleotide sequence ID" value="XM_002567510.1"/>
</dbReference>
<dbReference type="VEuPathDB" id="FungiDB:PCH_Pc21g05100"/>
<dbReference type="eggNOG" id="KOG0255">
    <property type="taxonomic scope" value="Eukaryota"/>
</dbReference>
<dbReference type="HOGENOM" id="CLU_008455_11_6_1"/>
<dbReference type="OMA" id="AMPIVYN"/>
<dbReference type="OrthoDB" id="446368at2759"/>
<dbReference type="BioCyc" id="PCHR:PC21G05100-MONOMER"/>
<dbReference type="Proteomes" id="UP000000724">
    <property type="component" value="Contig Pc00c21"/>
</dbReference>
<dbReference type="GO" id="GO:0005886">
    <property type="term" value="C:plasma membrane"/>
    <property type="evidence" value="ECO:0007669"/>
    <property type="project" value="TreeGrafter"/>
</dbReference>
<dbReference type="GO" id="GO:0022857">
    <property type="term" value="F:transmembrane transporter activity"/>
    <property type="evidence" value="ECO:0007669"/>
    <property type="project" value="InterPro"/>
</dbReference>
<dbReference type="CDD" id="cd17323">
    <property type="entry name" value="MFS_Tpo1_MDR_like"/>
    <property type="match status" value="1"/>
</dbReference>
<dbReference type="FunFam" id="1.20.1250.20:FF:000011">
    <property type="entry name" value="MFS multidrug transporter, putative"/>
    <property type="match status" value="1"/>
</dbReference>
<dbReference type="Gene3D" id="1.20.1250.20">
    <property type="entry name" value="MFS general substrate transporter like domains"/>
    <property type="match status" value="1"/>
</dbReference>
<dbReference type="InterPro" id="IPR011701">
    <property type="entry name" value="MFS"/>
</dbReference>
<dbReference type="InterPro" id="IPR020846">
    <property type="entry name" value="MFS_dom"/>
</dbReference>
<dbReference type="InterPro" id="IPR036259">
    <property type="entry name" value="MFS_trans_sf"/>
</dbReference>
<dbReference type="PANTHER" id="PTHR23502">
    <property type="entry name" value="MAJOR FACILITATOR SUPERFAMILY"/>
    <property type="match status" value="1"/>
</dbReference>
<dbReference type="PANTHER" id="PTHR23502:SF158">
    <property type="entry name" value="MULTIDRUG TRANSPORTER, PUTATIVE (AFU_ORTHOLOGUE AFUA_3G01890)-RELATED"/>
    <property type="match status" value="1"/>
</dbReference>
<dbReference type="Pfam" id="PF07690">
    <property type="entry name" value="MFS_1"/>
    <property type="match status" value="1"/>
</dbReference>
<dbReference type="SUPFAM" id="SSF103473">
    <property type="entry name" value="MFS general substrate transporter"/>
    <property type="match status" value="1"/>
</dbReference>
<dbReference type="PROSITE" id="PS50850">
    <property type="entry name" value="MFS"/>
    <property type="match status" value="1"/>
</dbReference>
<protein>
    <recommendedName>
        <fullName evidence="5">Major facilitator-type transporter sorT</fullName>
    </recommendedName>
    <alternativeName>
        <fullName evidence="5">Sorbicillinoid biosynthetic cluster transporter</fullName>
    </alternativeName>
</protein>
<comment type="function">
    <text evidence="7">Major facilitator-type transporter; part of the gene cluster that mediates the biosynthesis of sorbicillinoids, a diverse group of yellow secondary metabolites that restrict growth of competing pathogenic fungi but not of bacteria (PubMed:29104566).</text>
</comment>
<comment type="subcellular location">
    <subcellularLocation>
        <location evidence="1">Membrane</location>
        <topology evidence="1">Multi-pass membrane protein</topology>
    </subcellularLocation>
</comment>
<comment type="disruption phenotype">
    <text evidence="3">The production of sorbicillinoids shifts mostly towards tetrahydrobisvertinolon (PubMed:28618182).</text>
</comment>
<comment type="similarity">
    <text evidence="6">Belongs to the major facilitator superfamily. Sugar transporter (TC 2.A.1.1) family.</text>
</comment>
<proteinExistence type="inferred from homology"/>
<sequence>MSHTEPKAPVNTGEVENGHLYDGSGTEDDPFIVEFQKDDPGNPMNWGQSRKWFIAAIATLSVFAVTFTSSAYSVSANEVFKDFDISTEVFIVGLSLFVLGFAIGPAVWANIGLRSELYGRQILWIITHIAMVAFLGGSAGSQNVATLLILRFFAGTFGGSPLVNSGGTIADLFPPAQRGLALTIYCVAPFLGPILGPIVGGFVSESVGWRWVQGVCVIFIGVVGILGIVFIPETYGPVLLQRRTHQLAKADGKIYVSVLEKNQGKKLPSEVFKRALFRPWIFLFLEPIVLIASVYMAIIYGTVYMFMGAMPIVYNEDRGWSVGIGGLAFLGIAVGIIFGLVYAIWDNNVRYMKLFAAKSANPESRLPPAIVGGVALPIGMFAFAWTNYPSIHWSVSIILSAPFGFGCVLVILPIMNYLIDTYTIYAASVLAAAAIFRSVVGAVFPLFTTQMYHNLGIHWASSIPAFLTLLCMPFPLIMYRYGEAVRMKCKYSFEAAEMMRKMQLQQTAAATTTEKDKDSSSE</sequence>
<evidence type="ECO:0000255" key="1"/>
<evidence type="ECO:0000256" key="2">
    <source>
        <dbReference type="SAM" id="MobiDB-lite"/>
    </source>
</evidence>
<evidence type="ECO:0000269" key="3">
    <source>
    </source>
</evidence>
<evidence type="ECO:0000303" key="4">
    <source>
    </source>
</evidence>
<evidence type="ECO:0000303" key="5">
    <source>
    </source>
</evidence>
<evidence type="ECO:0000305" key="6"/>
<evidence type="ECO:0000305" key="7">
    <source>
    </source>
</evidence>